<name>MAP2_PODAN</name>
<feature type="chain" id="PRO_0000407665" description="Methionine aminopeptidase 2">
    <location>
        <begin position="1"/>
        <end position="445"/>
    </location>
</feature>
<feature type="region of interest" description="Disordered" evidence="2">
    <location>
        <begin position="1"/>
        <end position="89"/>
    </location>
</feature>
<feature type="compositionally biased region" description="Basic residues" evidence="2">
    <location>
        <begin position="60"/>
        <end position="74"/>
    </location>
</feature>
<feature type="binding site" evidence="1">
    <location>
        <position position="198"/>
    </location>
    <ligand>
        <name>substrate</name>
    </ligand>
</feature>
<feature type="binding site" evidence="1">
    <location>
        <position position="218"/>
    </location>
    <ligand>
        <name>a divalent metal cation</name>
        <dbReference type="ChEBI" id="CHEBI:60240"/>
        <label>1</label>
    </ligand>
</feature>
<feature type="binding site" evidence="1">
    <location>
        <position position="229"/>
    </location>
    <ligand>
        <name>a divalent metal cation</name>
        <dbReference type="ChEBI" id="CHEBI:60240"/>
        <label>1</label>
    </ligand>
</feature>
<feature type="binding site" evidence="1">
    <location>
        <position position="229"/>
    </location>
    <ligand>
        <name>a divalent metal cation</name>
        <dbReference type="ChEBI" id="CHEBI:60240"/>
        <label>2</label>
        <note>catalytic</note>
    </ligand>
</feature>
<feature type="binding site" evidence="1">
    <location>
        <position position="298"/>
    </location>
    <ligand>
        <name>a divalent metal cation</name>
        <dbReference type="ChEBI" id="CHEBI:60240"/>
        <label>2</label>
        <note>catalytic</note>
    </ligand>
</feature>
<feature type="binding site" evidence="1">
    <location>
        <position position="306"/>
    </location>
    <ligand>
        <name>substrate</name>
    </ligand>
</feature>
<feature type="binding site" evidence="1">
    <location>
        <position position="331"/>
    </location>
    <ligand>
        <name>a divalent metal cation</name>
        <dbReference type="ChEBI" id="CHEBI:60240"/>
        <label>2</label>
        <note>catalytic</note>
    </ligand>
</feature>
<feature type="binding site" evidence="1">
    <location>
        <position position="426"/>
    </location>
    <ligand>
        <name>a divalent metal cation</name>
        <dbReference type="ChEBI" id="CHEBI:60240"/>
        <label>1</label>
    </ligand>
</feature>
<feature type="binding site" evidence="1">
    <location>
        <position position="426"/>
    </location>
    <ligand>
        <name>a divalent metal cation</name>
        <dbReference type="ChEBI" id="CHEBI:60240"/>
        <label>2</label>
        <note>catalytic</note>
    </ligand>
</feature>
<proteinExistence type="inferred from homology"/>
<dbReference type="EC" id="3.4.11.18" evidence="1"/>
<dbReference type="EMBL" id="CU640366">
    <property type="protein sequence ID" value="CAP73616.1"/>
    <property type="molecule type" value="Genomic_DNA"/>
</dbReference>
<dbReference type="EMBL" id="FO904937">
    <property type="protein sequence ID" value="CDP26018.1"/>
    <property type="molecule type" value="Genomic_DNA"/>
</dbReference>
<dbReference type="RefSeq" id="XP_001911788.1">
    <property type="nucleotide sequence ID" value="XM_001911753.1"/>
</dbReference>
<dbReference type="SMR" id="B2B738"/>
<dbReference type="FunCoup" id="B2B738">
    <property type="interactions" value="1145"/>
</dbReference>
<dbReference type="STRING" id="515849.B2B738"/>
<dbReference type="MEROPS" id="M24.002"/>
<dbReference type="GeneID" id="6196226"/>
<dbReference type="KEGG" id="pan:PODANSg8833"/>
<dbReference type="VEuPathDB" id="FungiDB:PODANS_2_9800"/>
<dbReference type="eggNOG" id="KOG2775">
    <property type="taxonomic scope" value="Eukaryota"/>
</dbReference>
<dbReference type="HOGENOM" id="CLU_015857_7_1_1"/>
<dbReference type="InParanoid" id="B2B738"/>
<dbReference type="OrthoDB" id="7848262at2759"/>
<dbReference type="Proteomes" id="UP000001197">
    <property type="component" value="Chromosome 2"/>
</dbReference>
<dbReference type="GO" id="GO:0005737">
    <property type="term" value="C:cytoplasm"/>
    <property type="evidence" value="ECO:0007669"/>
    <property type="project" value="UniProtKB-SubCell"/>
</dbReference>
<dbReference type="GO" id="GO:0004239">
    <property type="term" value="F:initiator methionyl aminopeptidase activity"/>
    <property type="evidence" value="ECO:0007669"/>
    <property type="project" value="UniProtKB-UniRule"/>
</dbReference>
<dbReference type="GO" id="GO:0046872">
    <property type="term" value="F:metal ion binding"/>
    <property type="evidence" value="ECO:0007669"/>
    <property type="project" value="UniProtKB-UniRule"/>
</dbReference>
<dbReference type="GO" id="GO:0070006">
    <property type="term" value="F:metalloaminopeptidase activity"/>
    <property type="evidence" value="ECO:0007669"/>
    <property type="project" value="UniProtKB-UniRule"/>
</dbReference>
<dbReference type="GO" id="GO:0006508">
    <property type="term" value="P:proteolysis"/>
    <property type="evidence" value="ECO:0007669"/>
    <property type="project" value="UniProtKB-KW"/>
</dbReference>
<dbReference type="CDD" id="cd01088">
    <property type="entry name" value="MetAP2"/>
    <property type="match status" value="1"/>
</dbReference>
<dbReference type="Gene3D" id="3.90.230.10">
    <property type="entry name" value="Creatinase/methionine aminopeptidase superfamily"/>
    <property type="match status" value="1"/>
</dbReference>
<dbReference type="Gene3D" id="1.10.10.10">
    <property type="entry name" value="Winged helix-like DNA-binding domain superfamily/Winged helix DNA-binding domain"/>
    <property type="match status" value="1"/>
</dbReference>
<dbReference type="HAMAP" id="MF_03175">
    <property type="entry name" value="MetAP_2_euk"/>
    <property type="match status" value="1"/>
</dbReference>
<dbReference type="InterPro" id="IPR036005">
    <property type="entry name" value="Creatinase/aminopeptidase-like"/>
</dbReference>
<dbReference type="InterPro" id="IPR050247">
    <property type="entry name" value="Met_Aminopeptidase_Type2"/>
</dbReference>
<dbReference type="InterPro" id="IPR000994">
    <property type="entry name" value="Pept_M24"/>
</dbReference>
<dbReference type="InterPro" id="IPR001714">
    <property type="entry name" value="Pept_M24_MAP"/>
</dbReference>
<dbReference type="InterPro" id="IPR002468">
    <property type="entry name" value="Pept_M24A_MAP2"/>
</dbReference>
<dbReference type="InterPro" id="IPR018349">
    <property type="entry name" value="Pept_M24A_MAP2_BS"/>
</dbReference>
<dbReference type="InterPro" id="IPR036388">
    <property type="entry name" value="WH-like_DNA-bd_sf"/>
</dbReference>
<dbReference type="InterPro" id="IPR036390">
    <property type="entry name" value="WH_DNA-bd_sf"/>
</dbReference>
<dbReference type="NCBIfam" id="TIGR00501">
    <property type="entry name" value="met_pdase_II"/>
    <property type="match status" value="1"/>
</dbReference>
<dbReference type="PANTHER" id="PTHR45777">
    <property type="entry name" value="METHIONINE AMINOPEPTIDASE 2"/>
    <property type="match status" value="1"/>
</dbReference>
<dbReference type="PANTHER" id="PTHR45777:SF2">
    <property type="entry name" value="METHIONINE AMINOPEPTIDASE 2"/>
    <property type="match status" value="1"/>
</dbReference>
<dbReference type="Pfam" id="PF00557">
    <property type="entry name" value="Peptidase_M24"/>
    <property type="match status" value="1"/>
</dbReference>
<dbReference type="PRINTS" id="PR00599">
    <property type="entry name" value="MAPEPTIDASE"/>
</dbReference>
<dbReference type="SUPFAM" id="SSF55920">
    <property type="entry name" value="Creatinase/aminopeptidase"/>
    <property type="match status" value="1"/>
</dbReference>
<dbReference type="SUPFAM" id="SSF46785">
    <property type="entry name" value="Winged helix' DNA-binding domain"/>
    <property type="match status" value="1"/>
</dbReference>
<dbReference type="PROSITE" id="PS01202">
    <property type="entry name" value="MAP_2"/>
    <property type="match status" value="1"/>
</dbReference>
<accession>B2B738</accession>
<accession>A0A090D5L5</accession>
<evidence type="ECO:0000255" key="1">
    <source>
        <dbReference type="HAMAP-Rule" id="MF_03175"/>
    </source>
</evidence>
<evidence type="ECO:0000256" key="2">
    <source>
        <dbReference type="SAM" id="MobiDB-lite"/>
    </source>
</evidence>
<reference key="1">
    <citation type="journal article" date="2008" name="Genome Biol.">
        <title>The genome sequence of the model ascomycete fungus Podospora anserina.</title>
        <authorList>
            <person name="Espagne E."/>
            <person name="Lespinet O."/>
            <person name="Malagnac F."/>
            <person name="Da Silva C."/>
            <person name="Jaillon O."/>
            <person name="Porcel B.M."/>
            <person name="Couloux A."/>
            <person name="Aury J.-M."/>
            <person name="Segurens B."/>
            <person name="Poulain J."/>
            <person name="Anthouard V."/>
            <person name="Grossetete S."/>
            <person name="Khalili H."/>
            <person name="Coppin E."/>
            <person name="Dequard-Chablat M."/>
            <person name="Picard M."/>
            <person name="Contamine V."/>
            <person name="Arnaise S."/>
            <person name="Bourdais A."/>
            <person name="Berteaux-Lecellier V."/>
            <person name="Gautheret D."/>
            <person name="de Vries R.P."/>
            <person name="Battaglia E."/>
            <person name="Coutinho P.M."/>
            <person name="Danchin E.G.J."/>
            <person name="Henrissat B."/>
            <person name="El Khoury R."/>
            <person name="Sainsard-Chanet A."/>
            <person name="Boivin A."/>
            <person name="Pinan-Lucarre B."/>
            <person name="Sellem C.H."/>
            <person name="Debuchy R."/>
            <person name="Wincker P."/>
            <person name="Weissenbach J."/>
            <person name="Silar P."/>
        </authorList>
    </citation>
    <scope>NUCLEOTIDE SEQUENCE [LARGE SCALE GENOMIC DNA]</scope>
    <source>
        <strain>S / ATCC MYA-4624 / DSM 980 / FGSC 10383</strain>
    </source>
</reference>
<reference key="2">
    <citation type="journal article" date="2014" name="Genetics">
        <title>Maintaining two mating types: Structure of the mating type locus and its role in heterokaryosis in Podospora anserina.</title>
        <authorList>
            <person name="Grognet P."/>
            <person name="Bidard F."/>
            <person name="Kuchly C."/>
            <person name="Tong L.C.H."/>
            <person name="Coppin E."/>
            <person name="Benkhali J.A."/>
            <person name="Couloux A."/>
            <person name="Wincker P."/>
            <person name="Debuchy R."/>
            <person name="Silar P."/>
        </authorList>
    </citation>
    <scope>GENOME REANNOTATION</scope>
    <source>
        <strain>S / ATCC MYA-4624 / DSM 980 / FGSC 10383</strain>
    </source>
</reference>
<organism>
    <name type="scientific">Podospora anserina (strain S / ATCC MYA-4624 / DSM 980 / FGSC 10383)</name>
    <name type="common">Pleurage anserina</name>
    <dbReference type="NCBI Taxonomy" id="515849"/>
    <lineage>
        <taxon>Eukaryota</taxon>
        <taxon>Fungi</taxon>
        <taxon>Dikarya</taxon>
        <taxon>Ascomycota</taxon>
        <taxon>Pezizomycotina</taxon>
        <taxon>Sordariomycetes</taxon>
        <taxon>Sordariomycetidae</taxon>
        <taxon>Sordariales</taxon>
        <taxon>Podosporaceae</taxon>
        <taxon>Podospora</taxon>
        <taxon>Podospora anserina</taxon>
    </lineage>
</organism>
<protein>
    <recommendedName>
        <fullName evidence="1">Methionine aminopeptidase 2</fullName>
        <shortName evidence="1">MAP 2</shortName>
        <shortName evidence="1">MetAP 2</shortName>
        <ecNumber evidence="1">3.4.11.18</ecNumber>
    </recommendedName>
    <alternativeName>
        <fullName evidence="1">Peptidase M</fullName>
    </alternativeName>
</protein>
<comment type="function">
    <text evidence="1">Cotranslationally removes the N-terminal methionine from nascent proteins. The N-terminal methionine is often cleaved when the second residue in the primary sequence is small and uncharged (Met-Ala-, Cys, Gly, Pro, Ser, Thr, or Val).</text>
</comment>
<comment type="catalytic activity">
    <reaction evidence="1">
        <text>Release of N-terminal amino acids, preferentially methionine, from peptides and arylamides.</text>
        <dbReference type="EC" id="3.4.11.18"/>
    </reaction>
</comment>
<comment type="cofactor">
    <cofactor evidence="1">
        <name>Co(2+)</name>
        <dbReference type="ChEBI" id="CHEBI:48828"/>
    </cofactor>
    <cofactor evidence="1">
        <name>Zn(2+)</name>
        <dbReference type="ChEBI" id="CHEBI:29105"/>
    </cofactor>
    <cofactor evidence="1">
        <name>Mn(2+)</name>
        <dbReference type="ChEBI" id="CHEBI:29035"/>
    </cofactor>
    <cofactor evidence="1">
        <name>Fe(2+)</name>
        <dbReference type="ChEBI" id="CHEBI:29033"/>
    </cofactor>
    <text evidence="1">Binds 2 divalent metal cations per subunit. Has a high-affinity and a low affinity metal-binding site. The true nature of the physiological cofactor is under debate. The enzyme is active with cobalt, zinc, manganese or divalent iron ions. Most likely, methionine aminopeptidases function as mononuclear Fe(2+)-metalloproteases under physiological conditions, and the catalytically relevant metal-binding site has been assigned to the histidine-containing high-affinity site.</text>
</comment>
<comment type="subcellular location">
    <subcellularLocation>
        <location evidence="1">Cytoplasm</location>
    </subcellularLocation>
</comment>
<comment type="similarity">
    <text evidence="1">Belongs to the peptidase M24A family. Methionine aminopeptidase eukaryotic type 2 subfamily.</text>
</comment>
<keyword id="KW-0031">Aminopeptidase</keyword>
<keyword id="KW-0963">Cytoplasm</keyword>
<keyword id="KW-0378">Hydrolase</keyword>
<keyword id="KW-0479">Metal-binding</keyword>
<keyword id="KW-0645">Protease</keyword>
<keyword id="KW-1185">Reference proteome</keyword>
<gene>
    <name type="ordered locus">Pa_2_9800</name>
    <name type="ORF">PODANS_2_9800</name>
</gene>
<sequence length="445" mass="49022">MAAQAPVDEIAQLSVSDAATTKPKPGLDSATATNGNLNRDSDDSDDDAENAAPGAETGAAKKKKKRKPKKKKKNPTAQSDPPRVLISQLFPDKVYPKGEEVEYVNENRYRTTNEEKRHLDNLKNDFYNDYRHAAEAHRQTRQWAQKNIKPGWSLTDIANGIEDSVRALVGHQGLEEGDALKAGMGFPTGLSLNHCAAHYNPNAGNKMVLQQDDVLKVDIGVHVNGNIVDSAFTLAFNPRYDPLLEACKAATNEGLKQAGIDARLGEIGGYIQEVMESYEVELDGNTYQVKPIRNLNGHTILPYNIHGGKSVPIVKSNDQTKMEEGDVFAIETFGSTGNGYVHEEGEISHYAKRMDAPKVDLRLSSAKSLLNVINKNFGTLPFCRRYLDRLGQDKYLLGLNSLVANGVVESYPPLVDKKGSYTAQFEHTILIRPTVKEVISRGDDY</sequence>